<organism>
    <name type="scientific">Wolinella succinogenes (strain ATCC 29543 / DSM 1740 / CCUG 13145 / JCM 31913 / LMG 7466 / NCTC 11488 / FDC 602W)</name>
    <name type="common">Vibrio succinogenes</name>
    <dbReference type="NCBI Taxonomy" id="273121"/>
    <lineage>
        <taxon>Bacteria</taxon>
        <taxon>Pseudomonadati</taxon>
        <taxon>Campylobacterota</taxon>
        <taxon>Epsilonproteobacteria</taxon>
        <taxon>Campylobacterales</taxon>
        <taxon>Helicobacteraceae</taxon>
        <taxon>Wolinella</taxon>
    </lineage>
</organism>
<reference key="1">
    <citation type="journal article" date="2003" name="Proc. Natl. Acad. Sci. U.S.A.">
        <title>Complete genome sequence and analysis of Wolinella succinogenes.</title>
        <authorList>
            <person name="Baar C."/>
            <person name="Eppinger M."/>
            <person name="Raddatz G."/>
            <person name="Simon J."/>
            <person name="Lanz C."/>
            <person name="Klimmek O."/>
            <person name="Nandakumar R."/>
            <person name="Gross R."/>
            <person name="Rosinus A."/>
            <person name="Keller H."/>
            <person name="Jagtap P."/>
            <person name="Linke B."/>
            <person name="Meyer F."/>
            <person name="Lederer H."/>
            <person name="Schuster S.C."/>
        </authorList>
    </citation>
    <scope>NUCLEOTIDE SEQUENCE [LARGE SCALE GENOMIC DNA]</scope>
    <source>
        <strain>ATCC 29543 / DSM 1740 / CCUG 13145 / JCM 31913 / LMG 7466 / NCTC 11488 / FDC 602W</strain>
    </source>
</reference>
<proteinExistence type="inferred from homology"/>
<accession>Q7M9M4</accession>
<keyword id="KW-0963">Cytoplasm</keyword>
<keyword id="KW-0488">Methylation</keyword>
<keyword id="KW-0648">Protein biosynthesis</keyword>
<keyword id="KW-1185">Reference proteome</keyword>
<comment type="function">
    <text evidence="1">Peptide chain release factor 1 directs the termination of translation in response to the peptide chain termination codons UAG and UAA.</text>
</comment>
<comment type="subcellular location">
    <subcellularLocation>
        <location evidence="1">Cytoplasm</location>
    </subcellularLocation>
</comment>
<comment type="PTM">
    <text evidence="1">Methylated by PrmC. Methylation increases the termination efficiency of RF1.</text>
</comment>
<comment type="similarity">
    <text evidence="1">Belongs to the prokaryotic/mitochondrial release factor family.</text>
</comment>
<name>RF1_WOLSU</name>
<sequence length="355" mass="39961">MLISKLTPFIERFEEITRLLGTMEVISDIKRMTELSKEQSALEALVLKAKEYLQTHRSIQENRALFEDKELGDLAKEENKLLEESLESLESEIKLLLIPKDPNDDKNIYLEIRAGTGGDEAGIFVGDLFKSYCRYADLKGWKVEIISSSENSVGGYKEVIALIKGNGVYSRLKYEGGTHRVQRVPETESQGRIHTSAITVAIMPEVDDVEVNINPNDLKIDVFRSGGHGGQSVNTTDSAVRITHLPTGISVSMQDEKSQHKNKDKALKILKARLYEAELEAKLSENSAARKLQVGSGDRSERIRTYNYPQNRLTDHRIGLTLYSLEEIMLSGNFDQVVDPIVAHYQAEMMKESED</sequence>
<dbReference type="EMBL" id="BX571659">
    <property type="protein sequence ID" value="CAE09929.1"/>
    <property type="molecule type" value="Genomic_DNA"/>
</dbReference>
<dbReference type="RefSeq" id="WP_011138726.1">
    <property type="nucleotide sequence ID" value="NC_005090.1"/>
</dbReference>
<dbReference type="SMR" id="Q7M9M4"/>
<dbReference type="STRING" id="273121.WS0816"/>
<dbReference type="KEGG" id="wsu:WS0816"/>
<dbReference type="eggNOG" id="COG0216">
    <property type="taxonomic scope" value="Bacteria"/>
</dbReference>
<dbReference type="HOGENOM" id="CLU_036856_0_1_7"/>
<dbReference type="Proteomes" id="UP000000422">
    <property type="component" value="Chromosome"/>
</dbReference>
<dbReference type="GO" id="GO:0005737">
    <property type="term" value="C:cytoplasm"/>
    <property type="evidence" value="ECO:0007669"/>
    <property type="project" value="UniProtKB-SubCell"/>
</dbReference>
<dbReference type="GO" id="GO:0016149">
    <property type="term" value="F:translation release factor activity, codon specific"/>
    <property type="evidence" value="ECO:0007669"/>
    <property type="project" value="UniProtKB-UniRule"/>
</dbReference>
<dbReference type="FunFam" id="3.30.160.20:FF:000004">
    <property type="entry name" value="Peptide chain release factor 1"/>
    <property type="match status" value="1"/>
</dbReference>
<dbReference type="FunFam" id="3.30.70.1660:FF:000002">
    <property type="entry name" value="Peptide chain release factor 1"/>
    <property type="match status" value="1"/>
</dbReference>
<dbReference type="FunFam" id="3.30.70.1660:FF:000004">
    <property type="entry name" value="Peptide chain release factor 1"/>
    <property type="match status" value="1"/>
</dbReference>
<dbReference type="Gene3D" id="3.30.160.20">
    <property type="match status" value="1"/>
</dbReference>
<dbReference type="Gene3D" id="3.30.70.1660">
    <property type="match status" value="2"/>
</dbReference>
<dbReference type="Gene3D" id="6.10.140.1950">
    <property type="match status" value="1"/>
</dbReference>
<dbReference type="HAMAP" id="MF_00093">
    <property type="entry name" value="Rel_fac_1"/>
    <property type="match status" value="1"/>
</dbReference>
<dbReference type="InterPro" id="IPR005139">
    <property type="entry name" value="PCRF"/>
</dbReference>
<dbReference type="InterPro" id="IPR000352">
    <property type="entry name" value="Pep_chain_release_fac_I"/>
</dbReference>
<dbReference type="InterPro" id="IPR045853">
    <property type="entry name" value="Pep_chain_release_fac_I_sf"/>
</dbReference>
<dbReference type="InterPro" id="IPR050057">
    <property type="entry name" value="Prokaryotic/Mito_RF"/>
</dbReference>
<dbReference type="InterPro" id="IPR004373">
    <property type="entry name" value="RF-1"/>
</dbReference>
<dbReference type="NCBIfam" id="TIGR00019">
    <property type="entry name" value="prfA"/>
    <property type="match status" value="1"/>
</dbReference>
<dbReference type="NCBIfam" id="NF001859">
    <property type="entry name" value="PRK00591.1"/>
    <property type="match status" value="1"/>
</dbReference>
<dbReference type="PANTHER" id="PTHR43804">
    <property type="entry name" value="LD18447P"/>
    <property type="match status" value="1"/>
</dbReference>
<dbReference type="PANTHER" id="PTHR43804:SF7">
    <property type="entry name" value="LD18447P"/>
    <property type="match status" value="1"/>
</dbReference>
<dbReference type="Pfam" id="PF03462">
    <property type="entry name" value="PCRF"/>
    <property type="match status" value="1"/>
</dbReference>
<dbReference type="Pfam" id="PF00472">
    <property type="entry name" value="RF-1"/>
    <property type="match status" value="1"/>
</dbReference>
<dbReference type="SMART" id="SM00937">
    <property type="entry name" value="PCRF"/>
    <property type="match status" value="1"/>
</dbReference>
<dbReference type="SUPFAM" id="SSF75620">
    <property type="entry name" value="Release factor"/>
    <property type="match status" value="1"/>
</dbReference>
<dbReference type="PROSITE" id="PS00745">
    <property type="entry name" value="RF_PROK_I"/>
    <property type="match status" value="1"/>
</dbReference>
<feature type="chain" id="PRO_0000177771" description="Peptide chain release factor 1">
    <location>
        <begin position="1"/>
        <end position="355"/>
    </location>
</feature>
<feature type="modified residue" description="N5-methylglutamine" evidence="1">
    <location>
        <position position="231"/>
    </location>
</feature>
<protein>
    <recommendedName>
        <fullName evidence="1">Peptide chain release factor 1</fullName>
        <shortName evidence="1">RF-1</shortName>
    </recommendedName>
</protein>
<evidence type="ECO:0000255" key="1">
    <source>
        <dbReference type="HAMAP-Rule" id="MF_00093"/>
    </source>
</evidence>
<gene>
    <name evidence="1" type="primary">prfA</name>
    <name type="ordered locus">WS0816</name>
</gene>